<sequence length="35" mass="3997">MQVNDLGFIATILFVLVPTVFLLILYIQTRKETEG</sequence>
<comment type="function">
    <text evidence="1">One of the components of the core complex of photosystem II (PSII). PSII is a light-driven water:plastoquinone oxidoreductase that uses light energy to abstract electrons from H(2)O, generating O(2) and a proton gradient subsequently used for ATP formation. It consists of a core antenna complex that captures photons, and an electron transfer chain that converts photonic excitation into a charge separation. This subunit is found at the monomer-monomer interface.</text>
</comment>
<comment type="subunit">
    <text evidence="1">PSII is composed of 1 copy each of membrane proteins PsbA, PsbB, PsbC, PsbD, PsbE, PsbF, PsbH, PsbI, PsbJ, PsbK, PsbL, PsbM, PsbT, PsbX, PsbY, PsbZ, Psb30/Ycf12, peripheral proteins PsbO, CyanoQ (PsbQ), PsbU, PsbV and a large number of cofactors. It forms dimeric complexes.</text>
</comment>
<comment type="subcellular location">
    <subcellularLocation>
        <location evidence="1">Cellular thylakoid membrane</location>
        <topology evidence="1">Single-pass membrane protein</topology>
    </subcellularLocation>
</comment>
<comment type="similarity">
    <text evidence="1">Belongs to the PsbM family.</text>
</comment>
<feature type="chain" id="PRO_1000124440" description="Photosystem II reaction center protein M">
    <location>
        <begin position="1"/>
        <end position="35"/>
    </location>
</feature>
<feature type="transmembrane region" description="Helical" evidence="1">
    <location>
        <begin position="7"/>
        <end position="27"/>
    </location>
</feature>
<dbReference type="EMBL" id="CP001291">
    <property type="protein sequence ID" value="ACK71890.1"/>
    <property type="molecule type" value="Genomic_DNA"/>
</dbReference>
<dbReference type="RefSeq" id="WP_012596126.1">
    <property type="nucleotide sequence ID" value="NC_011729.1"/>
</dbReference>
<dbReference type="SMR" id="B7KFH4"/>
<dbReference type="STRING" id="65393.PCC7424_3498"/>
<dbReference type="KEGG" id="cyc:PCC7424_3498"/>
<dbReference type="eggNOG" id="ENOG50339PB">
    <property type="taxonomic scope" value="Bacteria"/>
</dbReference>
<dbReference type="HOGENOM" id="CLU_215415_0_0_3"/>
<dbReference type="OrthoDB" id="532820at2"/>
<dbReference type="Proteomes" id="UP000002384">
    <property type="component" value="Chromosome"/>
</dbReference>
<dbReference type="GO" id="GO:0009523">
    <property type="term" value="C:photosystem II"/>
    <property type="evidence" value="ECO:0007669"/>
    <property type="project" value="UniProtKB-KW"/>
</dbReference>
<dbReference type="GO" id="GO:0031676">
    <property type="term" value="C:plasma membrane-derived thylakoid membrane"/>
    <property type="evidence" value="ECO:0007669"/>
    <property type="project" value="UniProtKB-SubCell"/>
</dbReference>
<dbReference type="GO" id="GO:0019684">
    <property type="term" value="P:photosynthesis, light reaction"/>
    <property type="evidence" value="ECO:0007669"/>
    <property type="project" value="InterPro"/>
</dbReference>
<dbReference type="HAMAP" id="MF_00438">
    <property type="entry name" value="PSII_PsbM"/>
    <property type="match status" value="1"/>
</dbReference>
<dbReference type="InterPro" id="IPR007826">
    <property type="entry name" value="PSII_PsbM"/>
</dbReference>
<dbReference type="InterPro" id="IPR037269">
    <property type="entry name" value="PSII_PsbM_sf"/>
</dbReference>
<dbReference type="NCBIfam" id="TIGR03038">
    <property type="entry name" value="PS_II_psbM"/>
    <property type="match status" value="1"/>
</dbReference>
<dbReference type="PANTHER" id="PTHR35774">
    <property type="entry name" value="PHOTOSYSTEM II REACTION CENTER PROTEIN M"/>
    <property type="match status" value="1"/>
</dbReference>
<dbReference type="PANTHER" id="PTHR35774:SF1">
    <property type="entry name" value="PHOTOSYSTEM II REACTION CENTER PROTEIN M"/>
    <property type="match status" value="1"/>
</dbReference>
<dbReference type="Pfam" id="PF05151">
    <property type="entry name" value="PsbM"/>
    <property type="match status" value="1"/>
</dbReference>
<dbReference type="SUPFAM" id="SSF161033">
    <property type="entry name" value="Photosystem II reaction center protein M, PsbM"/>
    <property type="match status" value="1"/>
</dbReference>
<gene>
    <name evidence="1" type="primary">psbM</name>
    <name type="ordered locus">PCC7424_3498</name>
</gene>
<organism>
    <name type="scientific">Gloeothece citriformis (strain PCC 7424)</name>
    <name type="common">Cyanothece sp. (strain PCC 7424)</name>
    <dbReference type="NCBI Taxonomy" id="65393"/>
    <lineage>
        <taxon>Bacteria</taxon>
        <taxon>Bacillati</taxon>
        <taxon>Cyanobacteriota</taxon>
        <taxon>Cyanophyceae</taxon>
        <taxon>Oscillatoriophycideae</taxon>
        <taxon>Chroococcales</taxon>
        <taxon>Aphanothecaceae</taxon>
        <taxon>Gloeothece</taxon>
        <taxon>Gloeothece citriformis</taxon>
    </lineage>
</organism>
<accession>B7KFH4</accession>
<protein>
    <recommendedName>
        <fullName evidence="1">Photosystem II reaction center protein M</fullName>
        <shortName evidence="1">PSII-M</shortName>
    </recommendedName>
</protein>
<evidence type="ECO:0000255" key="1">
    <source>
        <dbReference type="HAMAP-Rule" id="MF_00438"/>
    </source>
</evidence>
<keyword id="KW-0472">Membrane</keyword>
<keyword id="KW-0602">Photosynthesis</keyword>
<keyword id="KW-0604">Photosystem II</keyword>
<keyword id="KW-0674">Reaction center</keyword>
<keyword id="KW-1185">Reference proteome</keyword>
<keyword id="KW-0793">Thylakoid</keyword>
<keyword id="KW-0812">Transmembrane</keyword>
<keyword id="KW-1133">Transmembrane helix</keyword>
<reference key="1">
    <citation type="journal article" date="2011" name="MBio">
        <title>Novel metabolic attributes of the genus Cyanothece, comprising a group of unicellular nitrogen-fixing Cyanobacteria.</title>
        <authorList>
            <person name="Bandyopadhyay A."/>
            <person name="Elvitigala T."/>
            <person name="Welsh E."/>
            <person name="Stockel J."/>
            <person name="Liberton M."/>
            <person name="Min H."/>
            <person name="Sherman L.A."/>
            <person name="Pakrasi H.B."/>
        </authorList>
    </citation>
    <scope>NUCLEOTIDE SEQUENCE [LARGE SCALE GENOMIC DNA]</scope>
    <source>
        <strain>PCC 7424</strain>
    </source>
</reference>
<name>PSBM_GLOC7</name>
<proteinExistence type="inferred from homology"/>